<protein>
    <recommendedName>
        <fullName>Uncharacterized outer-membrane protein y4mB</fullName>
    </recommendedName>
</protein>
<feature type="signal peptide" evidence="1">
    <location>
        <begin position="1"/>
        <end position="26"/>
    </location>
</feature>
<feature type="chain" id="PRO_0000020196" description="Uncharacterized outer-membrane protein y4mB">
    <location>
        <begin position="27"/>
        <end position="229"/>
    </location>
</feature>
<proteinExistence type="inferred from homology"/>
<reference key="1">
    <citation type="journal article" date="1997" name="Nature">
        <title>Molecular basis of symbiosis between Rhizobium and legumes.</title>
        <authorList>
            <person name="Freiberg C.A."/>
            <person name="Fellay R."/>
            <person name="Bairoch A."/>
            <person name="Broughton W.J."/>
            <person name="Rosenthal A."/>
            <person name="Perret X."/>
        </authorList>
    </citation>
    <scope>NUCLEOTIDE SEQUENCE [LARGE SCALE GENOMIC DNA]</scope>
    <source>
        <strain>NBRC 101917 / NGR234</strain>
    </source>
</reference>
<reference key="2">
    <citation type="journal article" date="2009" name="Appl. Environ. Microbiol.">
        <title>Rhizobium sp. strain NGR234 possesses a remarkable number of secretion systems.</title>
        <authorList>
            <person name="Schmeisser C."/>
            <person name="Liesegang H."/>
            <person name="Krysciak D."/>
            <person name="Bakkou N."/>
            <person name="Le Quere A."/>
            <person name="Wollherr A."/>
            <person name="Heinemeyer I."/>
            <person name="Morgenstern B."/>
            <person name="Pommerening-Roeser A."/>
            <person name="Flores M."/>
            <person name="Palacios R."/>
            <person name="Brenner S."/>
            <person name="Gottschalk G."/>
            <person name="Schmitz R.A."/>
            <person name="Broughton W.J."/>
            <person name="Perret X."/>
            <person name="Strittmatter A.W."/>
            <person name="Streit W.R."/>
        </authorList>
    </citation>
    <scope>NUCLEOTIDE SEQUENCE [LARGE SCALE GENOMIC DNA]</scope>
    <source>
        <strain>NBRC 101917 / NGR234</strain>
    </source>
</reference>
<sequence>MSRNDARYLRCTAALGAAFFACGAAAAELTSPPVAPATEGVAAGLSPWQIRVRGLGVLTEDSGSINGVPGSDLSYSDSLIPELDISYFFTDNIAAELILGTTYANIKEVGAVGVPVGKAWLLPPTLTLQYHFTDFGAFKPYLGAGINYSLFYNQSEKAGFHDLDVDNHVGAALQVGFDYMVDEHWGVNFDVKKIFLETEWKADHDVLGPLSGKAKIDPWLIGAGVTYRF</sequence>
<evidence type="ECO:0000255" key="1">
    <source>
        <dbReference type="PROSITE-ProRule" id="PRU00303"/>
    </source>
</evidence>
<evidence type="ECO:0000305" key="2"/>
<comment type="subcellular location">
    <subcellularLocation>
        <location evidence="2">Cell outer membrane</location>
        <topology evidence="2">Peripheral membrane protein</topology>
    </subcellularLocation>
</comment>
<comment type="similarity">
    <text evidence="2">Belongs to the OmpW/AlkL family.</text>
</comment>
<gene>
    <name type="ordered locus">NGR_a02570</name>
    <name type="ORF">y4mB</name>
</gene>
<dbReference type="EMBL" id="U00090">
    <property type="protein sequence ID" value="AAB91765.1"/>
    <property type="molecule type" value="Genomic_DNA"/>
</dbReference>
<dbReference type="RefSeq" id="NP_443968.1">
    <property type="nucleotide sequence ID" value="NC_000914.2"/>
</dbReference>
<dbReference type="RefSeq" id="WP_010875282.1">
    <property type="nucleotide sequence ID" value="NC_000914.2"/>
</dbReference>
<dbReference type="SMR" id="P55561"/>
<dbReference type="KEGG" id="rhi:NGR_a02570"/>
<dbReference type="PATRIC" id="fig|394.7.peg.267"/>
<dbReference type="eggNOG" id="COG3047">
    <property type="taxonomic scope" value="Bacteria"/>
</dbReference>
<dbReference type="HOGENOM" id="CLU_042505_0_1_5"/>
<dbReference type="OrthoDB" id="9807574at2"/>
<dbReference type="Proteomes" id="UP000001054">
    <property type="component" value="Plasmid pNGR234a"/>
</dbReference>
<dbReference type="GO" id="GO:0009279">
    <property type="term" value="C:cell outer membrane"/>
    <property type="evidence" value="ECO:0007669"/>
    <property type="project" value="UniProtKB-SubCell"/>
</dbReference>
<dbReference type="GO" id="GO:0055085">
    <property type="term" value="P:transmembrane transport"/>
    <property type="evidence" value="ECO:0007669"/>
    <property type="project" value="TreeGrafter"/>
</dbReference>
<dbReference type="Gene3D" id="2.40.160.20">
    <property type="match status" value="1"/>
</dbReference>
<dbReference type="InterPro" id="IPR011250">
    <property type="entry name" value="OMP/PagP_b-brl"/>
</dbReference>
<dbReference type="InterPro" id="IPR005618">
    <property type="entry name" value="OMPW"/>
</dbReference>
<dbReference type="PANTHER" id="PTHR36920">
    <property type="match status" value="1"/>
</dbReference>
<dbReference type="PANTHER" id="PTHR36920:SF1">
    <property type="entry name" value="OUTER MEMBRANE PROTEIN W"/>
    <property type="match status" value="1"/>
</dbReference>
<dbReference type="Pfam" id="PF03922">
    <property type="entry name" value="OmpW"/>
    <property type="match status" value="1"/>
</dbReference>
<dbReference type="SUPFAM" id="SSF56925">
    <property type="entry name" value="OMPA-like"/>
    <property type="match status" value="1"/>
</dbReference>
<dbReference type="PROSITE" id="PS51257">
    <property type="entry name" value="PROKAR_LIPOPROTEIN"/>
    <property type="match status" value="1"/>
</dbReference>
<organism>
    <name type="scientific">Sinorhizobium fredii (strain NBRC 101917 / NGR234)</name>
    <dbReference type="NCBI Taxonomy" id="394"/>
    <lineage>
        <taxon>Bacteria</taxon>
        <taxon>Pseudomonadati</taxon>
        <taxon>Pseudomonadota</taxon>
        <taxon>Alphaproteobacteria</taxon>
        <taxon>Hyphomicrobiales</taxon>
        <taxon>Rhizobiaceae</taxon>
        <taxon>Sinorhizobium/Ensifer group</taxon>
        <taxon>Sinorhizobium</taxon>
    </lineage>
</organism>
<geneLocation type="plasmid">
    <name>sym pNGR234a</name>
</geneLocation>
<accession>P55561</accession>
<keyword id="KW-0998">Cell outer membrane</keyword>
<keyword id="KW-0472">Membrane</keyword>
<keyword id="KW-0614">Plasmid</keyword>
<keyword id="KW-1185">Reference proteome</keyword>
<keyword id="KW-0732">Signal</keyword>
<keyword id="KW-0812">Transmembrane</keyword>
<keyword id="KW-1134">Transmembrane beta strand</keyword>
<name>Y4MB_SINFN</name>